<gene>
    <name evidence="1" type="primary">murQ</name>
    <name type="ordered locus">BCAH187_A0987</name>
</gene>
<feature type="chain" id="PRO_1000116989" description="N-acetylmuramic acid 6-phosphate etherase">
    <location>
        <begin position="1"/>
        <end position="294"/>
    </location>
</feature>
<feature type="domain" description="SIS" evidence="1">
    <location>
        <begin position="54"/>
        <end position="217"/>
    </location>
</feature>
<feature type="active site" description="Proton donor" evidence="1">
    <location>
        <position position="82"/>
    </location>
</feature>
<feature type="active site" evidence="1">
    <location>
        <position position="113"/>
    </location>
</feature>
<proteinExistence type="inferred from homology"/>
<comment type="function">
    <text evidence="1">Specifically catalyzes the cleavage of the D-lactyl ether substituent of MurNAc 6-phosphate, producing GlcNAc 6-phosphate and D-lactate.</text>
</comment>
<comment type="catalytic activity">
    <reaction evidence="1">
        <text>N-acetyl-D-muramate 6-phosphate + H2O = N-acetyl-D-glucosamine 6-phosphate + (R)-lactate</text>
        <dbReference type="Rhea" id="RHEA:26410"/>
        <dbReference type="ChEBI" id="CHEBI:15377"/>
        <dbReference type="ChEBI" id="CHEBI:16004"/>
        <dbReference type="ChEBI" id="CHEBI:57513"/>
        <dbReference type="ChEBI" id="CHEBI:58722"/>
        <dbReference type="EC" id="4.2.1.126"/>
    </reaction>
</comment>
<comment type="pathway">
    <text evidence="1">Amino-sugar metabolism; N-acetylmuramate degradation.</text>
</comment>
<comment type="subunit">
    <text evidence="1">Homodimer.</text>
</comment>
<comment type="miscellaneous">
    <text evidence="1">A lyase-type mechanism (elimination/hydration) is suggested for the cleavage of the lactyl ether bond of MurNAc 6-phosphate, with the formation of an alpha,beta-unsaturated aldehyde intermediate with (E)-stereochemistry, followed by the syn addition of water to give product.</text>
</comment>
<comment type="similarity">
    <text evidence="1">Belongs to the GCKR-like family. MurNAc-6-P etherase subfamily.</text>
</comment>
<name>MURQ_BACC7</name>
<dbReference type="EC" id="4.2.1.126" evidence="1"/>
<dbReference type="EMBL" id="CP001177">
    <property type="protein sequence ID" value="ACJ79045.1"/>
    <property type="molecule type" value="Genomic_DNA"/>
</dbReference>
<dbReference type="SMR" id="B7HXH0"/>
<dbReference type="KEGG" id="bcr:BCAH187_A0987"/>
<dbReference type="HOGENOM" id="CLU_049049_1_1_9"/>
<dbReference type="UniPathway" id="UPA00342"/>
<dbReference type="Proteomes" id="UP000002214">
    <property type="component" value="Chromosome"/>
</dbReference>
<dbReference type="GO" id="GO:0097367">
    <property type="term" value="F:carbohydrate derivative binding"/>
    <property type="evidence" value="ECO:0007669"/>
    <property type="project" value="InterPro"/>
</dbReference>
<dbReference type="GO" id="GO:0016835">
    <property type="term" value="F:carbon-oxygen lyase activity"/>
    <property type="evidence" value="ECO:0007669"/>
    <property type="project" value="UniProtKB-UniRule"/>
</dbReference>
<dbReference type="GO" id="GO:0016803">
    <property type="term" value="F:ether hydrolase activity"/>
    <property type="evidence" value="ECO:0007669"/>
    <property type="project" value="TreeGrafter"/>
</dbReference>
<dbReference type="GO" id="GO:0046348">
    <property type="term" value="P:amino sugar catabolic process"/>
    <property type="evidence" value="ECO:0007669"/>
    <property type="project" value="InterPro"/>
</dbReference>
<dbReference type="GO" id="GO:0097173">
    <property type="term" value="P:N-acetylmuramic acid catabolic process"/>
    <property type="evidence" value="ECO:0007669"/>
    <property type="project" value="UniProtKB-UniPathway"/>
</dbReference>
<dbReference type="GO" id="GO:0009254">
    <property type="term" value="P:peptidoglycan turnover"/>
    <property type="evidence" value="ECO:0007669"/>
    <property type="project" value="TreeGrafter"/>
</dbReference>
<dbReference type="CDD" id="cd05007">
    <property type="entry name" value="SIS_Etherase"/>
    <property type="match status" value="1"/>
</dbReference>
<dbReference type="FunFam" id="1.10.8.1080:FF:000001">
    <property type="entry name" value="N-acetylmuramic acid 6-phosphate etherase"/>
    <property type="match status" value="1"/>
</dbReference>
<dbReference type="FunFam" id="3.40.50.10490:FF:000014">
    <property type="entry name" value="N-acetylmuramic acid 6-phosphate etherase"/>
    <property type="match status" value="1"/>
</dbReference>
<dbReference type="Gene3D" id="1.10.8.1080">
    <property type="match status" value="1"/>
</dbReference>
<dbReference type="Gene3D" id="3.40.50.10490">
    <property type="entry name" value="Glucose-6-phosphate isomerase like protein, domain 1"/>
    <property type="match status" value="1"/>
</dbReference>
<dbReference type="HAMAP" id="MF_00068">
    <property type="entry name" value="MurQ"/>
    <property type="match status" value="1"/>
</dbReference>
<dbReference type="InterPro" id="IPR005488">
    <property type="entry name" value="Etherase_MurQ"/>
</dbReference>
<dbReference type="InterPro" id="IPR005486">
    <property type="entry name" value="Glucokinase_regulatory_CS"/>
</dbReference>
<dbReference type="InterPro" id="IPR040190">
    <property type="entry name" value="MURQ/GCKR"/>
</dbReference>
<dbReference type="InterPro" id="IPR001347">
    <property type="entry name" value="SIS_dom"/>
</dbReference>
<dbReference type="InterPro" id="IPR046348">
    <property type="entry name" value="SIS_dom_sf"/>
</dbReference>
<dbReference type="NCBIfam" id="TIGR00274">
    <property type="entry name" value="N-acetylmuramic acid 6-phosphate etherase"/>
    <property type="match status" value="1"/>
</dbReference>
<dbReference type="NCBIfam" id="NF003915">
    <property type="entry name" value="PRK05441.1"/>
    <property type="match status" value="1"/>
</dbReference>
<dbReference type="NCBIfam" id="NF009222">
    <property type="entry name" value="PRK12570.1"/>
    <property type="match status" value="1"/>
</dbReference>
<dbReference type="PANTHER" id="PTHR10088">
    <property type="entry name" value="GLUCOKINASE REGULATORY PROTEIN"/>
    <property type="match status" value="1"/>
</dbReference>
<dbReference type="PANTHER" id="PTHR10088:SF4">
    <property type="entry name" value="GLUCOKINASE REGULATORY PROTEIN"/>
    <property type="match status" value="1"/>
</dbReference>
<dbReference type="Pfam" id="PF22645">
    <property type="entry name" value="GKRP_SIS_N"/>
    <property type="match status" value="1"/>
</dbReference>
<dbReference type="SUPFAM" id="SSF53697">
    <property type="entry name" value="SIS domain"/>
    <property type="match status" value="1"/>
</dbReference>
<dbReference type="PROSITE" id="PS01272">
    <property type="entry name" value="GCKR"/>
    <property type="match status" value="1"/>
</dbReference>
<dbReference type="PROSITE" id="PS51464">
    <property type="entry name" value="SIS"/>
    <property type="match status" value="1"/>
</dbReference>
<protein>
    <recommendedName>
        <fullName evidence="1">N-acetylmuramic acid 6-phosphate etherase</fullName>
        <shortName evidence="1">MurNAc-6-P etherase</shortName>
        <ecNumber evidence="1">4.2.1.126</ecNumber>
    </recommendedName>
    <alternativeName>
        <fullName evidence="1">N-acetylmuramic acid 6-phosphate hydrolase</fullName>
    </alternativeName>
    <alternativeName>
        <fullName evidence="1">N-acetylmuramic acid 6-phosphate lyase</fullName>
    </alternativeName>
</protein>
<keyword id="KW-0119">Carbohydrate metabolism</keyword>
<keyword id="KW-0456">Lyase</keyword>
<accession>B7HXH0</accession>
<sequence>MLENLSTEHRNEKTMNLDEMSIKEVLQSMNEEDRTVALAVENEIEQIEKVVQTVIKSFEEEGRLIYIGAGTSGRLGILDAVECPPTFGTDDKMVQGFIAGGLKAFTKAVEGAEDREELAEEDLKSIGLNEKDTVIGIAASGRTPYVIGGLKYANSVGASTASISCNKNAEISKYAKLNVEVETGAEILTGSTRLKAGTAQKLVLNMISTASMIGVGKVYKNLMVDVQSTNEKLIERSKRIIVEATGVSYEVAAEHYEKAERNVKAAIVMVLLQCEYGEALEKLKEAKGFVKKAL</sequence>
<organism>
    <name type="scientific">Bacillus cereus (strain AH187)</name>
    <dbReference type="NCBI Taxonomy" id="405534"/>
    <lineage>
        <taxon>Bacteria</taxon>
        <taxon>Bacillati</taxon>
        <taxon>Bacillota</taxon>
        <taxon>Bacilli</taxon>
        <taxon>Bacillales</taxon>
        <taxon>Bacillaceae</taxon>
        <taxon>Bacillus</taxon>
        <taxon>Bacillus cereus group</taxon>
    </lineage>
</organism>
<reference key="1">
    <citation type="submission" date="2008-10" db="EMBL/GenBank/DDBJ databases">
        <title>Genome sequence of Bacillus cereus AH187.</title>
        <authorList>
            <person name="Dodson R.J."/>
            <person name="Durkin A.S."/>
            <person name="Rosovitz M.J."/>
            <person name="Rasko D.A."/>
            <person name="Kolsto A.B."/>
            <person name="Okstad O.A."/>
            <person name="Ravel J."/>
            <person name="Sutton G."/>
        </authorList>
    </citation>
    <scope>NUCLEOTIDE SEQUENCE [LARGE SCALE GENOMIC DNA]</scope>
    <source>
        <strain>AH187</strain>
    </source>
</reference>
<evidence type="ECO:0000255" key="1">
    <source>
        <dbReference type="HAMAP-Rule" id="MF_00068"/>
    </source>
</evidence>